<accession>B8CQV5</accession>
<reference key="1">
    <citation type="journal article" date="2008" name="PLoS ONE">
        <title>Environmental adaptation: genomic analysis of the piezotolerant and psychrotolerant deep-sea iron reducing bacterium Shewanella piezotolerans WP3.</title>
        <authorList>
            <person name="Wang F."/>
            <person name="Wang J."/>
            <person name="Jian H."/>
            <person name="Zhang B."/>
            <person name="Li S."/>
            <person name="Wang F."/>
            <person name="Zeng X."/>
            <person name="Gao L."/>
            <person name="Bartlett D.H."/>
            <person name="Yu J."/>
            <person name="Hu S."/>
            <person name="Xiao X."/>
        </authorList>
    </citation>
    <scope>NUCLEOTIDE SEQUENCE [LARGE SCALE GENOMIC DNA]</scope>
    <source>
        <strain>WP3 / JCM 13877</strain>
    </source>
</reference>
<name>ISPE_SHEPW</name>
<evidence type="ECO:0000255" key="1">
    <source>
        <dbReference type="HAMAP-Rule" id="MF_00061"/>
    </source>
</evidence>
<dbReference type="EC" id="2.7.1.148" evidence="1"/>
<dbReference type="EMBL" id="CP000472">
    <property type="protein sequence ID" value="ACJ30571.1"/>
    <property type="molecule type" value="Genomic_DNA"/>
</dbReference>
<dbReference type="RefSeq" id="WP_020913913.1">
    <property type="nucleotide sequence ID" value="NC_011566.1"/>
</dbReference>
<dbReference type="SMR" id="B8CQV5"/>
<dbReference type="STRING" id="225849.swp_3895"/>
<dbReference type="KEGG" id="swp:swp_3895"/>
<dbReference type="eggNOG" id="COG1947">
    <property type="taxonomic scope" value="Bacteria"/>
</dbReference>
<dbReference type="HOGENOM" id="CLU_053057_3_0_6"/>
<dbReference type="OrthoDB" id="9809438at2"/>
<dbReference type="UniPathway" id="UPA00056">
    <property type="reaction ID" value="UER00094"/>
</dbReference>
<dbReference type="Proteomes" id="UP000000753">
    <property type="component" value="Chromosome"/>
</dbReference>
<dbReference type="GO" id="GO:0050515">
    <property type="term" value="F:4-(cytidine 5'-diphospho)-2-C-methyl-D-erythritol kinase activity"/>
    <property type="evidence" value="ECO:0007669"/>
    <property type="project" value="UniProtKB-UniRule"/>
</dbReference>
<dbReference type="GO" id="GO:0005524">
    <property type="term" value="F:ATP binding"/>
    <property type="evidence" value="ECO:0007669"/>
    <property type="project" value="UniProtKB-UniRule"/>
</dbReference>
<dbReference type="GO" id="GO:0019288">
    <property type="term" value="P:isopentenyl diphosphate biosynthetic process, methylerythritol 4-phosphate pathway"/>
    <property type="evidence" value="ECO:0007669"/>
    <property type="project" value="UniProtKB-UniRule"/>
</dbReference>
<dbReference type="GO" id="GO:0016114">
    <property type="term" value="P:terpenoid biosynthetic process"/>
    <property type="evidence" value="ECO:0007669"/>
    <property type="project" value="InterPro"/>
</dbReference>
<dbReference type="Gene3D" id="3.30.230.10">
    <property type="match status" value="1"/>
</dbReference>
<dbReference type="Gene3D" id="3.30.70.890">
    <property type="entry name" value="GHMP kinase, C-terminal domain"/>
    <property type="match status" value="1"/>
</dbReference>
<dbReference type="HAMAP" id="MF_00061">
    <property type="entry name" value="IspE"/>
    <property type="match status" value="1"/>
</dbReference>
<dbReference type="InterPro" id="IPR013750">
    <property type="entry name" value="GHMP_kinase_C_dom"/>
</dbReference>
<dbReference type="InterPro" id="IPR036554">
    <property type="entry name" value="GHMP_kinase_C_sf"/>
</dbReference>
<dbReference type="InterPro" id="IPR006204">
    <property type="entry name" value="GHMP_kinase_N_dom"/>
</dbReference>
<dbReference type="InterPro" id="IPR004424">
    <property type="entry name" value="IspE"/>
</dbReference>
<dbReference type="InterPro" id="IPR020568">
    <property type="entry name" value="Ribosomal_Su5_D2-typ_SF"/>
</dbReference>
<dbReference type="InterPro" id="IPR014721">
    <property type="entry name" value="Ribsml_uS5_D2-typ_fold_subgr"/>
</dbReference>
<dbReference type="NCBIfam" id="TIGR00154">
    <property type="entry name" value="ispE"/>
    <property type="match status" value="1"/>
</dbReference>
<dbReference type="NCBIfam" id="NF011202">
    <property type="entry name" value="PRK14608.1"/>
    <property type="match status" value="1"/>
</dbReference>
<dbReference type="PANTHER" id="PTHR43527">
    <property type="entry name" value="4-DIPHOSPHOCYTIDYL-2-C-METHYL-D-ERYTHRITOL KINASE, CHLOROPLASTIC"/>
    <property type="match status" value="1"/>
</dbReference>
<dbReference type="PANTHER" id="PTHR43527:SF2">
    <property type="entry name" value="4-DIPHOSPHOCYTIDYL-2-C-METHYL-D-ERYTHRITOL KINASE, CHLOROPLASTIC"/>
    <property type="match status" value="1"/>
</dbReference>
<dbReference type="Pfam" id="PF08544">
    <property type="entry name" value="GHMP_kinases_C"/>
    <property type="match status" value="1"/>
</dbReference>
<dbReference type="Pfam" id="PF00288">
    <property type="entry name" value="GHMP_kinases_N"/>
    <property type="match status" value="1"/>
</dbReference>
<dbReference type="PIRSF" id="PIRSF010376">
    <property type="entry name" value="IspE"/>
    <property type="match status" value="1"/>
</dbReference>
<dbReference type="SUPFAM" id="SSF55060">
    <property type="entry name" value="GHMP Kinase, C-terminal domain"/>
    <property type="match status" value="1"/>
</dbReference>
<dbReference type="SUPFAM" id="SSF54211">
    <property type="entry name" value="Ribosomal protein S5 domain 2-like"/>
    <property type="match status" value="1"/>
</dbReference>
<comment type="function">
    <text evidence="1">Catalyzes the phosphorylation of the position 2 hydroxy group of 4-diphosphocytidyl-2C-methyl-D-erythritol.</text>
</comment>
<comment type="catalytic activity">
    <reaction evidence="1">
        <text>4-CDP-2-C-methyl-D-erythritol + ATP = 4-CDP-2-C-methyl-D-erythritol 2-phosphate + ADP + H(+)</text>
        <dbReference type="Rhea" id="RHEA:18437"/>
        <dbReference type="ChEBI" id="CHEBI:15378"/>
        <dbReference type="ChEBI" id="CHEBI:30616"/>
        <dbReference type="ChEBI" id="CHEBI:57823"/>
        <dbReference type="ChEBI" id="CHEBI:57919"/>
        <dbReference type="ChEBI" id="CHEBI:456216"/>
        <dbReference type="EC" id="2.7.1.148"/>
    </reaction>
</comment>
<comment type="pathway">
    <text evidence="1">Isoprenoid biosynthesis; isopentenyl diphosphate biosynthesis via DXP pathway; isopentenyl diphosphate from 1-deoxy-D-xylulose 5-phosphate: step 3/6.</text>
</comment>
<comment type="similarity">
    <text evidence="1">Belongs to the GHMP kinase family. IspE subfamily.</text>
</comment>
<protein>
    <recommendedName>
        <fullName evidence="1">4-diphosphocytidyl-2-C-methyl-D-erythritol kinase</fullName>
        <shortName evidence="1">CMK</shortName>
        <ecNumber evidence="1">2.7.1.148</ecNumber>
    </recommendedName>
    <alternativeName>
        <fullName evidence="1">4-(cytidine-5'-diphospho)-2-C-methyl-D-erythritol kinase</fullName>
    </alternativeName>
</protein>
<gene>
    <name evidence="1" type="primary">ispE</name>
    <name type="ordered locus">swp_3895</name>
</gene>
<feature type="chain" id="PRO_1000116934" description="4-diphosphocytidyl-2-C-methyl-D-erythritol kinase">
    <location>
        <begin position="1"/>
        <end position="284"/>
    </location>
</feature>
<feature type="active site" evidence="1">
    <location>
        <position position="14"/>
    </location>
</feature>
<feature type="active site" evidence="1">
    <location>
        <position position="140"/>
    </location>
</feature>
<feature type="binding site" evidence="1">
    <location>
        <begin position="98"/>
        <end position="108"/>
    </location>
    <ligand>
        <name>ATP</name>
        <dbReference type="ChEBI" id="CHEBI:30616"/>
    </ligand>
</feature>
<keyword id="KW-0067">ATP-binding</keyword>
<keyword id="KW-0414">Isoprene biosynthesis</keyword>
<keyword id="KW-0418">Kinase</keyword>
<keyword id="KW-0547">Nucleotide-binding</keyword>
<keyword id="KW-0808">Transferase</keyword>
<organism>
    <name type="scientific">Shewanella piezotolerans (strain WP3 / JCM 13877)</name>
    <dbReference type="NCBI Taxonomy" id="225849"/>
    <lineage>
        <taxon>Bacteria</taxon>
        <taxon>Pseudomonadati</taxon>
        <taxon>Pseudomonadota</taxon>
        <taxon>Gammaproteobacteria</taxon>
        <taxon>Alteromonadales</taxon>
        <taxon>Shewanellaceae</taxon>
        <taxon>Shewanella</taxon>
    </lineage>
</organism>
<sequence>MTAALSLGWPAPAKLNLFLHINGRREDGYHELQTLFQFIEHCDFLDFKVTENTNLKLHSNMSTVVADNDNLILRAAKSLQEYSQCQQGAEIWLDKRLPMGGGLGGGSSDAATTLVALNSLWGLNIPIDELAKIGLKLGADVPVFINGFSAFAEGVGEQLQPVYPPQPWYLVVVPDVHVSTAEIFQDPALPRNTPKHSLTSLMESPWKNDCQELVAKHSPQVAKALAWLLEYAPSRMTGTGACVFGQFEQEQQAKDALAKLPTSMNGFVAKGANKSPLMLRLAQC</sequence>
<proteinExistence type="inferred from homology"/>